<accession>B3QWJ5</accession>
<keyword id="KW-0210">Decarboxylase</keyword>
<keyword id="KW-0456">Lyase</keyword>
<keyword id="KW-0670">Pyruvate</keyword>
<keyword id="KW-1185">Reference proteome</keyword>
<name>PDAD_CHLT3</name>
<sequence length="182" mass="20081">MTFVPSKIFFTKGVGRHREYLSSFELALRDAKIEKCNLVTVSSIYPPSCKRISIEEGLKHLSPGQITFCVMARNSTNERNRLIASSIGVALPADASQYGYLSEHHPYGETAEYAGEYAEDLAATMLATTLGIEFDSNTAWDEREEVYKMSGKIVKSFNVTQSAEGDKNGLWTTVISAAILLP</sequence>
<feature type="chain" id="PRO_1000145466" description="Pyruvoyl-dependent arginine decarboxylase subunit beta" evidence="1">
    <location>
        <begin position="1"/>
        <end position="42"/>
    </location>
</feature>
<feature type="chain" id="PRO_1000145467" description="Pyruvoyl-dependent arginine decarboxylase subunit alpha" evidence="1">
    <location>
        <begin position="43"/>
        <end position="182"/>
    </location>
</feature>
<feature type="site" description="Cleavage (non-hydrolytic)" evidence="1">
    <location>
        <begin position="42"/>
        <end position="43"/>
    </location>
</feature>
<feature type="modified residue" description="Pyruvic acid (Ser)" evidence="1">
    <location>
        <position position="43"/>
    </location>
</feature>
<organism>
    <name type="scientific">Chloroherpeton thalassium (strain ATCC 35110 / GB-78)</name>
    <dbReference type="NCBI Taxonomy" id="517418"/>
    <lineage>
        <taxon>Bacteria</taxon>
        <taxon>Pseudomonadati</taxon>
        <taxon>Chlorobiota</taxon>
        <taxon>Chlorobiia</taxon>
        <taxon>Chlorobiales</taxon>
        <taxon>Chloroherpetonaceae</taxon>
        <taxon>Chloroherpeton</taxon>
    </lineage>
</organism>
<dbReference type="EC" id="4.1.1.19" evidence="1"/>
<dbReference type="EMBL" id="CP001100">
    <property type="protein sequence ID" value="ACF14755.1"/>
    <property type="molecule type" value="Genomic_DNA"/>
</dbReference>
<dbReference type="RefSeq" id="WP_012500837.1">
    <property type="nucleotide sequence ID" value="NC_011026.1"/>
</dbReference>
<dbReference type="SMR" id="B3QWJ5"/>
<dbReference type="STRING" id="517418.Ctha_2304"/>
<dbReference type="KEGG" id="cts:Ctha_2304"/>
<dbReference type="eggNOG" id="COG1945">
    <property type="taxonomic scope" value="Bacteria"/>
</dbReference>
<dbReference type="HOGENOM" id="CLU_114389_0_0_10"/>
<dbReference type="OrthoDB" id="9783061at2"/>
<dbReference type="Proteomes" id="UP000001208">
    <property type="component" value="Chromosome"/>
</dbReference>
<dbReference type="GO" id="GO:0008792">
    <property type="term" value="F:arginine decarboxylase activity"/>
    <property type="evidence" value="ECO:0007669"/>
    <property type="project" value="UniProtKB-EC"/>
</dbReference>
<dbReference type="GO" id="GO:0006527">
    <property type="term" value="P:arginine catabolic process"/>
    <property type="evidence" value="ECO:0007669"/>
    <property type="project" value="InterPro"/>
</dbReference>
<dbReference type="Gene3D" id="3.30.60.30">
    <property type="match status" value="1"/>
</dbReference>
<dbReference type="Gene3D" id="3.50.20.10">
    <property type="entry name" value="Pyruvoyl-Dependent Histidine Decarboxylase, subunit B"/>
    <property type="match status" value="1"/>
</dbReference>
<dbReference type="HAMAP" id="MF_01404">
    <property type="entry name" value="PvlArgDC"/>
    <property type="match status" value="1"/>
</dbReference>
<dbReference type="InterPro" id="IPR016104">
    <property type="entry name" value="Pyr-dep_his/arg-deCO2ase"/>
</dbReference>
<dbReference type="InterPro" id="IPR016105">
    <property type="entry name" value="Pyr-dep_his/arg-deCO2ase_sand"/>
</dbReference>
<dbReference type="InterPro" id="IPR002724">
    <property type="entry name" value="Pyruvoyl-dep_arg_deCO2ase"/>
</dbReference>
<dbReference type="NCBIfam" id="NF009064">
    <property type="entry name" value="PRK12398.1"/>
    <property type="match status" value="1"/>
</dbReference>
<dbReference type="NCBIfam" id="TIGR00286">
    <property type="entry name" value="pyruvoyl-dependent arginine decarboxylase"/>
    <property type="match status" value="1"/>
</dbReference>
<dbReference type="PANTHER" id="PTHR40438">
    <property type="entry name" value="PYRUVOYL-DEPENDENT ARGININE DECARBOXYLASE"/>
    <property type="match status" value="1"/>
</dbReference>
<dbReference type="PANTHER" id="PTHR40438:SF1">
    <property type="entry name" value="PYRUVOYL-DEPENDENT ARGININE DECARBOXYLASE"/>
    <property type="match status" value="1"/>
</dbReference>
<dbReference type="Pfam" id="PF01862">
    <property type="entry name" value="PvlArgDC"/>
    <property type="match status" value="1"/>
</dbReference>
<dbReference type="PIRSF" id="PIRSF005216">
    <property type="entry name" value="Pyruvoyl-dep_arg_deCO2ase"/>
    <property type="match status" value="1"/>
</dbReference>
<dbReference type="SFLD" id="SFLDG01170">
    <property type="entry name" value="Pyruvoyl-dependent_arginine_de"/>
    <property type="match status" value="1"/>
</dbReference>
<dbReference type="SFLD" id="SFLDS00055">
    <property type="entry name" value="Pyruvoyl-Dependent_Histidine/A"/>
    <property type="match status" value="1"/>
</dbReference>
<dbReference type="SUPFAM" id="SSF56271">
    <property type="entry name" value="Pyruvoyl-dependent histidine and arginine decarboxylases"/>
    <property type="match status" value="1"/>
</dbReference>
<comment type="catalytic activity">
    <reaction evidence="1">
        <text>L-arginine + H(+) = agmatine + CO2</text>
        <dbReference type="Rhea" id="RHEA:17641"/>
        <dbReference type="ChEBI" id="CHEBI:15378"/>
        <dbReference type="ChEBI" id="CHEBI:16526"/>
        <dbReference type="ChEBI" id="CHEBI:32682"/>
        <dbReference type="ChEBI" id="CHEBI:58145"/>
        <dbReference type="EC" id="4.1.1.19"/>
    </reaction>
</comment>
<comment type="cofactor">
    <cofactor evidence="1">
        <name>pyruvate</name>
        <dbReference type="ChEBI" id="CHEBI:15361"/>
    </cofactor>
    <text evidence="1">Binds 1 pyruvoyl group covalently per subunit.</text>
</comment>
<comment type="similarity">
    <text evidence="1">Belongs to the PdaD family.</text>
</comment>
<evidence type="ECO:0000255" key="1">
    <source>
        <dbReference type="HAMAP-Rule" id="MF_01404"/>
    </source>
</evidence>
<reference key="1">
    <citation type="submission" date="2008-06" db="EMBL/GenBank/DDBJ databases">
        <title>Complete sequence of Chloroherpeton thalassium ATCC 35110.</title>
        <authorList>
            <consortium name="US DOE Joint Genome Institute"/>
            <person name="Lucas S."/>
            <person name="Copeland A."/>
            <person name="Lapidus A."/>
            <person name="Glavina del Rio T."/>
            <person name="Dalin E."/>
            <person name="Tice H."/>
            <person name="Bruce D."/>
            <person name="Goodwin L."/>
            <person name="Pitluck S."/>
            <person name="Schmutz J."/>
            <person name="Larimer F."/>
            <person name="Land M."/>
            <person name="Hauser L."/>
            <person name="Kyrpides N."/>
            <person name="Mikhailova N."/>
            <person name="Liu Z."/>
            <person name="Li T."/>
            <person name="Zhao F."/>
            <person name="Overmann J."/>
            <person name="Bryant D.A."/>
            <person name="Richardson P."/>
        </authorList>
    </citation>
    <scope>NUCLEOTIDE SEQUENCE [LARGE SCALE GENOMIC DNA]</scope>
    <source>
        <strain>ATCC 35110 / GB-78</strain>
    </source>
</reference>
<gene>
    <name evidence="1" type="primary">pdaD</name>
    <name type="ordered locus">Ctha_2304</name>
</gene>
<protein>
    <recommendedName>
        <fullName evidence="1">Probable pyruvoyl-dependent arginine decarboxylase</fullName>
        <shortName evidence="1">PvlArgDC</shortName>
        <ecNumber evidence="1">4.1.1.19</ecNumber>
    </recommendedName>
    <component>
        <recommendedName>
            <fullName evidence="1">Pyruvoyl-dependent arginine decarboxylase subunit beta</fullName>
        </recommendedName>
    </component>
    <component>
        <recommendedName>
            <fullName evidence="1">Pyruvoyl-dependent arginine decarboxylase subunit alpha</fullName>
        </recommendedName>
    </component>
</protein>
<proteinExistence type="inferred from homology"/>